<feature type="chain" id="PRO_0000424128" description="6-hydroxytryprostatin B O-methyltransferase">
    <location>
        <begin position="1"/>
        <end position="342"/>
    </location>
</feature>
<feature type="active site" description="Proton acceptor" evidence="1">
    <location>
        <position position="244"/>
    </location>
</feature>
<feature type="binding site" evidence="1">
    <location>
        <position position="201"/>
    </location>
    <ligand>
        <name>S-adenosyl-L-methionine</name>
        <dbReference type="ChEBI" id="CHEBI:59789"/>
    </ligand>
</feature>
<dbReference type="EC" id="2.1.1.293" evidence="9"/>
<dbReference type="EMBL" id="AAHF01000014">
    <property type="protein sequence ID" value="EAL85146.1"/>
    <property type="molecule type" value="Genomic_DNA"/>
</dbReference>
<dbReference type="RefSeq" id="XP_747184.1">
    <property type="nucleotide sequence ID" value="XM_742091.1"/>
</dbReference>
<dbReference type="SMR" id="Q4WAW6"/>
<dbReference type="STRING" id="330879.Q4WAW6"/>
<dbReference type="EnsemblFungi" id="EAL85146">
    <property type="protein sequence ID" value="EAL85146"/>
    <property type="gene ID" value="AFUA_8G00200"/>
</dbReference>
<dbReference type="GeneID" id="3504531"/>
<dbReference type="KEGG" id="afm:AFUA_8G00200"/>
<dbReference type="VEuPathDB" id="FungiDB:Afu8g00200"/>
<dbReference type="eggNOG" id="KOG3178">
    <property type="taxonomic scope" value="Eukaryota"/>
</dbReference>
<dbReference type="HOGENOM" id="CLU_005533_1_0_1"/>
<dbReference type="InParanoid" id="Q4WAW6"/>
<dbReference type="OMA" id="RRSDIGM"/>
<dbReference type="OrthoDB" id="1606438at2759"/>
<dbReference type="BRENDA" id="2.1.1.293">
    <property type="organism ID" value="508"/>
</dbReference>
<dbReference type="Proteomes" id="UP000002530">
    <property type="component" value="Chromosome 8"/>
</dbReference>
<dbReference type="GO" id="GO:0008171">
    <property type="term" value="F:O-methyltransferase activity"/>
    <property type="evidence" value="ECO:0000314"/>
    <property type="project" value="AspGD"/>
</dbReference>
<dbReference type="GO" id="GO:1900772">
    <property type="term" value="P:fumitremorgin B biosynthetic process"/>
    <property type="evidence" value="ECO:0000315"/>
    <property type="project" value="AspGD"/>
</dbReference>
<dbReference type="GO" id="GO:0032259">
    <property type="term" value="P:methylation"/>
    <property type="evidence" value="ECO:0007669"/>
    <property type="project" value="UniProtKB-KW"/>
</dbReference>
<dbReference type="GO" id="GO:1902181">
    <property type="term" value="P:verruculogen biosynthetic process"/>
    <property type="evidence" value="ECO:0000314"/>
    <property type="project" value="GO_Central"/>
</dbReference>
<dbReference type="FunFam" id="3.40.50.150:FF:000646">
    <property type="entry name" value="6-hydroxytryprostatin B O-methyltransferase"/>
    <property type="match status" value="1"/>
</dbReference>
<dbReference type="Gene3D" id="3.40.50.150">
    <property type="entry name" value="Vaccinia Virus protein VP39"/>
    <property type="match status" value="1"/>
</dbReference>
<dbReference type="Gene3D" id="1.10.10.10">
    <property type="entry name" value="Winged helix-like DNA-binding domain superfamily/Winged helix DNA-binding domain"/>
    <property type="match status" value="1"/>
</dbReference>
<dbReference type="InterPro" id="IPR016461">
    <property type="entry name" value="COMT-like"/>
</dbReference>
<dbReference type="InterPro" id="IPR001077">
    <property type="entry name" value="O_MeTrfase_dom"/>
</dbReference>
<dbReference type="InterPro" id="IPR029063">
    <property type="entry name" value="SAM-dependent_MTases_sf"/>
</dbReference>
<dbReference type="InterPro" id="IPR036388">
    <property type="entry name" value="WH-like_DNA-bd_sf"/>
</dbReference>
<dbReference type="InterPro" id="IPR036390">
    <property type="entry name" value="WH_DNA-bd_sf"/>
</dbReference>
<dbReference type="PANTHER" id="PTHR43712:SF5">
    <property type="entry name" value="O-METHYLTRANSFERASE ASQN-RELATED"/>
    <property type="match status" value="1"/>
</dbReference>
<dbReference type="PANTHER" id="PTHR43712">
    <property type="entry name" value="PUTATIVE (AFU_ORTHOLOGUE AFUA_4G14580)-RELATED"/>
    <property type="match status" value="1"/>
</dbReference>
<dbReference type="Pfam" id="PF00891">
    <property type="entry name" value="Methyltransf_2"/>
    <property type="match status" value="1"/>
</dbReference>
<dbReference type="PIRSF" id="PIRSF005739">
    <property type="entry name" value="O-mtase"/>
    <property type="match status" value="1"/>
</dbReference>
<dbReference type="SUPFAM" id="SSF53335">
    <property type="entry name" value="S-adenosyl-L-methionine-dependent methyltransferases"/>
    <property type="match status" value="1"/>
</dbReference>
<dbReference type="SUPFAM" id="SSF46785">
    <property type="entry name" value="Winged helix' DNA-binding domain"/>
    <property type="match status" value="1"/>
</dbReference>
<dbReference type="PROSITE" id="PS51683">
    <property type="entry name" value="SAM_OMT_II"/>
    <property type="match status" value="1"/>
</dbReference>
<name>FTMD_ASPFU</name>
<gene>
    <name evidence="10" type="primary">ftmMT</name>
    <name evidence="10" type="synonym">ftmD</name>
    <name type="ORF">AFUA_8G00200</name>
</gene>
<reference key="1">
    <citation type="journal article" date="2005" name="Nature">
        <title>Genomic sequence of the pathogenic and allergenic filamentous fungus Aspergillus fumigatus.</title>
        <authorList>
            <person name="Nierman W.C."/>
            <person name="Pain A."/>
            <person name="Anderson M.J."/>
            <person name="Wortman J.R."/>
            <person name="Kim H.S."/>
            <person name="Arroyo J."/>
            <person name="Berriman M."/>
            <person name="Abe K."/>
            <person name="Archer D.B."/>
            <person name="Bermejo C."/>
            <person name="Bennett J.W."/>
            <person name="Bowyer P."/>
            <person name="Chen D."/>
            <person name="Collins M."/>
            <person name="Coulsen R."/>
            <person name="Davies R."/>
            <person name="Dyer P.S."/>
            <person name="Farman M.L."/>
            <person name="Fedorova N."/>
            <person name="Fedorova N.D."/>
            <person name="Feldblyum T.V."/>
            <person name="Fischer R."/>
            <person name="Fosker N."/>
            <person name="Fraser A."/>
            <person name="Garcia J.L."/>
            <person name="Garcia M.J."/>
            <person name="Goble A."/>
            <person name="Goldman G.H."/>
            <person name="Gomi K."/>
            <person name="Griffith-Jones S."/>
            <person name="Gwilliam R."/>
            <person name="Haas B.J."/>
            <person name="Haas H."/>
            <person name="Harris D.E."/>
            <person name="Horiuchi H."/>
            <person name="Huang J."/>
            <person name="Humphray S."/>
            <person name="Jimenez J."/>
            <person name="Keller N."/>
            <person name="Khouri H."/>
            <person name="Kitamoto K."/>
            <person name="Kobayashi T."/>
            <person name="Konzack S."/>
            <person name="Kulkarni R."/>
            <person name="Kumagai T."/>
            <person name="Lafton A."/>
            <person name="Latge J.-P."/>
            <person name="Li W."/>
            <person name="Lord A."/>
            <person name="Lu C."/>
            <person name="Majoros W.H."/>
            <person name="May G.S."/>
            <person name="Miller B.L."/>
            <person name="Mohamoud Y."/>
            <person name="Molina M."/>
            <person name="Monod M."/>
            <person name="Mouyna I."/>
            <person name="Mulligan S."/>
            <person name="Murphy L.D."/>
            <person name="O'Neil S."/>
            <person name="Paulsen I."/>
            <person name="Penalva M.A."/>
            <person name="Pertea M."/>
            <person name="Price C."/>
            <person name="Pritchard B.L."/>
            <person name="Quail M.A."/>
            <person name="Rabbinowitsch E."/>
            <person name="Rawlins N."/>
            <person name="Rajandream M.A."/>
            <person name="Reichard U."/>
            <person name="Renauld H."/>
            <person name="Robson G.D."/>
            <person name="Rodriguez de Cordoba S."/>
            <person name="Rodriguez-Pena J.M."/>
            <person name="Ronning C.M."/>
            <person name="Rutter S."/>
            <person name="Salzberg S.L."/>
            <person name="Sanchez M."/>
            <person name="Sanchez-Ferrero J.C."/>
            <person name="Saunders D."/>
            <person name="Seeger K."/>
            <person name="Squares R."/>
            <person name="Squares S."/>
            <person name="Takeuchi M."/>
            <person name="Tekaia F."/>
            <person name="Turner G."/>
            <person name="Vazquez de Aldana C.R."/>
            <person name="Weidman J."/>
            <person name="White O."/>
            <person name="Woodward J.R."/>
            <person name="Yu J.-H."/>
            <person name="Fraser C.M."/>
            <person name="Galagan J.E."/>
            <person name="Asai K."/>
            <person name="Machida M."/>
            <person name="Hall N."/>
            <person name="Barrell B.G."/>
            <person name="Denning D.W."/>
        </authorList>
    </citation>
    <scope>NUCLEOTIDE SEQUENCE [LARGE SCALE GENOMIC DNA]</scope>
    <source>
        <strain>ATCC MYA-4609 / CBS 101355 / FGSC A1100 / Af293</strain>
    </source>
</reference>
<reference key="2">
    <citation type="journal article" date="2005" name="Microbiology">
        <title>Overproduction, purification and characterization of FtmPT1, a brevianamide F prenyltransferase from Aspergillus fumigatus.</title>
        <authorList>
            <person name="Grundmann A."/>
            <person name="Li S.M."/>
        </authorList>
    </citation>
    <scope>FUNCTION</scope>
</reference>
<reference key="3">
    <citation type="journal article" date="2006" name="ChemBioChem">
        <title>The fumitremorgin gene cluster of Aspergillus fumigatus: identification of a gene encoding brevianamide F synthetase.</title>
        <authorList>
            <person name="Maiya S."/>
            <person name="Grundmann A."/>
            <person name="Li S.M."/>
            <person name="Turner G."/>
        </authorList>
    </citation>
    <scope>FUNCTION</scope>
</reference>
<reference key="4">
    <citation type="journal article" date="2008" name="ChemBioChem">
        <title>FtmPT2, an N-prenyltransferase from Aspergillus fumigatus, catalyses the last step in the biosynthesis of fumitremorgin B.</title>
        <authorList>
            <person name="Grundmann A."/>
            <person name="Kuznetsova T."/>
            <person name="Afiyatullov S.S."/>
            <person name="Li S.M."/>
        </authorList>
    </citation>
    <scope>FUNCTION</scope>
</reference>
<reference key="5">
    <citation type="journal article" date="2009" name="ChemBioChem">
        <title>Identification of cytochrome P450s required for fumitremorgin biosynthesis in Aspergillus fumigatus.</title>
        <authorList>
            <person name="Kato N."/>
            <person name="Suzuki H."/>
            <person name="Takagi H."/>
            <person name="Asami Y."/>
            <person name="Kakeya H."/>
            <person name="Uramoto M."/>
            <person name="Usui T."/>
            <person name="Takahashi S."/>
            <person name="Sugimoto Y."/>
            <person name="Osada H."/>
        </authorList>
    </citation>
    <scope>FUNCTION</scope>
</reference>
<reference key="6">
    <citation type="journal article" date="2009" name="Org. Biomol. Chem.">
        <title>FtmOx1, a non-heme Fe(II) and alpha-ketoglutarate-dependent dioxygenase, catalyses the endoperoxide formation of verruculogen in Aspergillus fumigatus.</title>
        <authorList>
            <person name="Steffan N."/>
            <person name="Grundmann A."/>
            <person name="Afiyatullov S."/>
            <person name="Ruan H."/>
            <person name="Li S.M."/>
        </authorList>
    </citation>
    <scope>FUNCTION</scope>
</reference>
<reference key="7">
    <citation type="journal article" date="2010" name="J. Am. Chem. Soc.">
        <title>Structure-function analysis of an enzymatic prenyl transfer reaction identifies a reaction chamber with modifiable specificity.</title>
        <authorList>
            <person name="Jost M."/>
            <person name="Zocher G."/>
            <person name="Tarcz S."/>
            <person name="Matuschek M."/>
            <person name="Xie X."/>
            <person name="Li S.M."/>
            <person name="Stehle T."/>
        </authorList>
    </citation>
    <scope>FUNCTION</scope>
</reference>
<reference key="8">
    <citation type="journal article" date="2012" name="Org. Biomol. Chem.">
        <title>Breaking the regioselectivity of indole prenyltransferases: identification of regular C3-prenylated hexahydropyrrolo[2,3-b]indoles as side products of the regular C2-prenyltransferase FtmPT1.</title>
        <authorList>
            <person name="Wollinsky B."/>
            <person name="Ludwig L."/>
            <person name="Xie X."/>
            <person name="Li S.M."/>
        </authorList>
    </citation>
    <scope>FUNCTION</scope>
</reference>
<reference key="9">
    <citation type="journal article" date="2013" name="Biosci. Biotechnol. Biochem.">
        <title>A point mutation in ftmD blocks the fumitremorgin biosynthetic pathway in Aspergillus fumigatus strain Af293.</title>
        <authorList>
            <person name="Kato N."/>
            <person name="Suzuki H."/>
            <person name="Okumura H."/>
            <person name="Takahashi S."/>
            <person name="Osada H."/>
        </authorList>
    </citation>
    <scope>FUNCTION</scope>
    <scope>CATALYTIC ACTIVITY</scope>
    <scope>BIOPHYSICOCHEMICAL PROPERTIES</scope>
    <scope>SUBUNIT</scope>
    <scope>PATHWAY</scope>
    <source>
        <strain>ATCC MYA-4609 / CBS 101355 / FGSC A1100 / Af293</strain>
    </source>
</reference>
<accession>Q4WAW6</accession>
<protein>
    <recommendedName>
        <fullName evidence="10">6-hydroxytryprostatin B O-methyltransferase</fullName>
        <ecNumber evidence="9">2.1.1.293</ecNumber>
    </recommendedName>
    <alternativeName>
        <fullName evidence="10">Fumitremorgin biosynthesis protein D</fullName>
    </alternativeName>
</protein>
<organism>
    <name type="scientific">Aspergillus fumigatus (strain ATCC MYA-4609 / CBS 101355 / FGSC A1100 / Af293)</name>
    <name type="common">Neosartorya fumigata</name>
    <dbReference type="NCBI Taxonomy" id="330879"/>
    <lineage>
        <taxon>Eukaryota</taxon>
        <taxon>Fungi</taxon>
        <taxon>Dikarya</taxon>
        <taxon>Ascomycota</taxon>
        <taxon>Pezizomycotina</taxon>
        <taxon>Eurotiomycetes</taxon>
        <taxon>Eurotiomycetidae</taxon>
        <taxon>Eurotiales</taxon>
        <taxon>Aspergillaceae</taxon>
        <taxon>Aspergillus</taxon>
        <taxon>Aspergillus subgen. Fumigati</taxon>
    </lineage>
</organism>
<sequence length="342" mass="38436">MTQAVDIGTIQTLIRLEVPDQVPLTGSIPYDALVKKLKTPVDPELLQRLIRFTRLVGFLDEDAEGAVKHSPMSAIFVNDPDTAGQARFMADFGIRPCSFIYESIKLDPSGEAARQGPLALMAREPGAREGPTFFEVLEKDPVNRKRWHDGMAVHNDSMVRHVAGAYDWGTVQSLVDIGGSEGHVAAVIVNAFPHIQITVQDLPEIIEKARQRGDRHPNIIFEEHDFFTPQPRIADAYFLRLILHDWNDADCTRIVRQISSALRPGARLLIMDAVLPEPGEGSLQSERRLRRSDIGMYTLFSAKERSLAQMRRLVEDCDSRLRFEKLYTPPGSHASMLSWICE</sequence>
<proteinExistence type="evidence at protein level"/>
<comment type="function">
    <text evidence="2 3 4 5 6 7 8 9 11 12">6-hydroxytryprostatin B O-methyltransferase; part of the gene cluster that mediates the biosynthesis of fumitremorgins, indole alkaloids that carry not only intriguing chemical structures, but also interesting biological and pharmacological activities (PubMed:23649274). The biosynthesis of fumitremorgin-type alkaloids begins by condensation of the two amino acids L-tryptophan and L-proline to brevianamide F, catalyzed by the non-ribosomal peptide synthetase ftmA (PubMed:16755625). Brevianamide F is then prenylated by the prenyltransferase ftmPT1/ftmB in the presence of dimethylallyl diphosphate, resulting in the formation of tryprostatin B (PubMed:16000710, PubMed:21105662, PubMed:23090579). The three cytochrome P450 monooxygenases, ftmP450-1/ftmC, ftmP450-2/ftmE and ftmP450-3/FtmG, are responsible for the conversion of tryprostatin B to 6-hydroxytryprostatin B, tryprostatin A to fumitremorgin C and fumitremorgin C to 12,13-dihydroxyfumitremorgin C, respectively (PubMed:19226505). The putative methyltransferase ftmMT/ftmD is expected for the conversion of 6-hydroxytryprostatin B to tryprostatin A (Probable). FtmPT2/FtmH catalyzes the prenylation of 12,13-dihydroxyfumitre-morgin C in the presence of dimethylallyl diphosphate, resulting in the formation of fumitremorgin B (PubMed:18683158). Fumitremorgin B is further converted to verruculogen by ftmOx1/ftmF via the insertion of an endoperoxide bond between the two prenyl moieties (PubMed:19763315). In some fungal species, verruculogen is further converted to fumitremorgin A, but the enzymes involved in this step have not been identified yet (Probable).</text>
</comment>
<comment type="catalytic activity">
    <reaction evidence="9">
        <text>6-hydroxytryprostatin B + S-adenosyl-L-methionine = tryprostatin A + S-adenosyl-L-homocysteine + H(+)</text>
        <dbReference type="Rhea" id="RHEA:37903"/>
        <dbReference type="ChEBI" id="CHEBI:15378"/>
        <dbReference type="ChEBI" id="CHEBI:57856"/>
        <dbReference type="ChEBI" id="CHEBI:59789"/>
        <dbReference type="ChEBI" id="CHEBI:72761"/>
        <dbReference type="ChEBI" id="CHEBI:72762"/>
        <dbReference type="EC" id="2.1.1.293"/>
    </reaction>
</comment>
<comment type="biophysicochemical properties">
    <kinetics>
        <KM evidence="9">4.5 uM for S-adenosyl-L-methionine</KM>
        <KM evidence="9">120 uM for 6-hydroxytryprostatin B</KM>
        <text>kcat is 8.2 sec(-1) with 6-hydroxytryprostatin B as substrate. kcat is 6.9 sec(-1) with S-adenosyl-L-methionine as substrate.</text>
    </kinetics>
</comment>
<comment type="pathway">
    <text evidence="9">Mycotoxin biosynthesis.</text>
</comment>
<comment type="subunit">
    <text evidence="9">Homodimer.</text>
</comment>
<comment type="similarity">
    <text evidence="1">Belongs to the class I-like SAM-binding methyltransferase superfamily. Cation-independent O-methyltransferase family.</text>
</comment>
<comment type="caution">
    <text evidence="13">In contrast to other A.fumigatus strains, strain ATCC MYA-4609 does not produce indole alkaloids such as fumitremorgins and verruculogen. While the biosynthetic pathway is complete, a variation in this enzyme abolishes production of the tryprostatin A intermediate. The weak methyltransferase activity is probably due to the presence of Leu-202 instead of an Arg residue that affects the binding of 6-hydroxytryprostatin B (PubMed:23649274).</text>
</comment>
<evidence type="ECO:0000255" key="1">
    <source>
        <dbReference type="PROSITE-ProRule" id="PRU01020"/>
    </source>
</evidence>
<evidence type="ECO:0000269" key="2">
    <source>
    </source>
</evidence>
<evidence type="ECO:0000269" key="3">
    <source>
    </source>
</evidence>
<evidence type="ECO:0000269" key="4">
    <source>
    </source>
</evidence>
<evidence type="ECO:0000269" key="5">
    <source>
    </source>
</evidence>
<evidence type="ECO:0000269" key="6">
    <source>
    </source>
</evidence>
<evidence type="ECO:0000269" key="7">
    <source>
    </source>
</evidence>
<evidence type="ECO:0000269" key="8">
    <source>
    </source>
</evidence>
<evidence type="ECO:0000269" key="9">
    <source>
    </source>
</evidence>
<evidence type="ECO:0000303" key="10">
    <source>
    </source>
</evidence>
<evidence type="ECO:0000305" key="11"/>
<evidence type="ECO:0000305" key="12">
    <source>
    </source>
</evidence>
<evidence type="ECO:0000305" key="13">
    <source>
    </source>
</evidence>
<keyword id="KW-0489">Methyltransferase</keyword>
<keyword id="KW-1185">Reference proteome</keyword>
<keyword id="KW-0949">S-adenosyl-L-methionine</keyword>
<keyword id="KW-0808">Transferase</keyword>
<keyword id="KW-0843">Virulence</keyword>